<sequence>MPNIFSLICICLNSALQPSGFFFAKLPEAYAFLNPIVDFMPVIPVLFFLLAFVWQAAVSFR</sequence>
<evidence type="ECO:0000255" key="1">
    <source>
        <dbReference type="HAMAP-Rule" id="MF_00441"/>
    </source>
</evidence>
<protein>
    <recommendedName>
        <fullName evidence="1">Photosystem II reaction center protein K</fullName>
        <shortName evidence="1">PSII-K</shortName>
    </recommendedName>
</protein>
<dbReference type="EMBL" id="AJ627251">
    <property type="protein sequence ID" value="CAF28576.1"/>
    <property type="molecule type" value="Genomic_DNA"/>
</dbReference>
<dbReference type="RefSeq" id="YP_053138.1">
    <property type="nucleotide sequence ID" value="NC_006050.1"/>
</dbReference>
<dbReference type="SMR" id="Q6EW65"/>
<dbReference type="GeneID" id="2896145"/>
<dbReference type="GO" id="GO:0009535">
    <property type="term" value="C:chloroplast thylakoid membrane"/>
    <property type="evidence" value="ECO:0007669"/>
    <property type="project" value="UniProtKB-SubCell"/>
</dbReference>
<dbReference type="GO" id="GO:0009539">
    <property type="term" value="C:photosystem II reaction center"/>
    <property type="evidence" value="ECO:0007669"/>
    <property type="project" value="InterPro"/>
</dbReference>
<dbReference type="GO" id="GO:0015979">
    <property type="term" value="P:photosynthesis"/>
    <property type="evidence" value="ECO:0007669"/>
    <property type="project" value="UniProtKB-UniRule"/>
</dbReference>
<dbReference type="HAMAP" id="MF_00441">
    <property type="entry name" value="PSII_PsbK"/>
    <property type="match status" value="1"/>
</dbReference>
<dbReference type="InterPro" id="IPR003687">
    <property type="entry name" value="PSII_PsbK"/>
</dbReference>
<dbReference type="InterPro" id="IPR037270">
    <property type="entry name" value="PSII_PsbK_sf"/>
</dbReference>
<dbReference type="NCBIfam" id="NF002715">
    <property type="entry name" value="PRK02553.1"/>
    <property type="match status" value="1"/>
</dbReference>
<dbReference type="PANTHER" id="PTHR35325">
    <property type="match status" value="1"/>
</dbReference>
<dbReference type="PANTHER" id="PTHR35325:SF1">
    <property type="entry name" value="PHOTOSYSTEM II REACTION CENTER PROTEIN K"/>
    <property type="match status" value="1"/>
</dbReference>
<dbReference type="Pfam" id="PF02533">
    <property type="entry name" value="PsbK"/>
    <property type="match status" value="1"/>
</dbReference>
<dbReference type="SUPFAM" id="SSF161037">
    <property type="entry name" value="Photosystem II reaction center protein K, PsbK"/>
    <property type="match status" value="1"/>
</dbReference>
<keyword id="KW-0150">Chloroplast</keyword>
<keyword id="KW-0472">Membrane</keyword>
<keyword id="KW-0602">Photosynthesis</keyword>
<keyword id="KW-0604">Photosystem II</keyword>
<keyword id="KW-0934">Plastid</keyword>
<keyword id="KW-0674">Reaction center</keyword>
<keyword id="KW-0793">Thylakoid</keyword>
<keyword id="KW-0812">Transmembrane</keyword>
<keyword id="KW-1133">Transmembrane helix</keyword>
<accession>Q6EW65</accession>
<name>PSBK_NYMAL</name>
<geneLocation type="chloroplast"/>
<comment type="function">
    <text evidence="1">One of the components of the core complex of photosystem II (PSII). PSII is a light-driven water:plastoquinone oxidoreductase that uses light energy to abstract electrons from H(2)O, generating O(2) and a proton gradient subsequently used for ATP formation. It consists of a core antenna complex that captures photons, and an electron transfer chain that converts photonic excitation into a charge separation.</text>
</comment>
<comment type="subunit">
    <text evidence="1">PSII is composed of 1 copy each of membrane proteins PsbA, PsbB, PsbC, PsbD, PsbE, PsbF, PsbH, PsbI, PsbJ, PsbK, PsbL, PsbM, PsbT, PsbX, PsbY, PsbZ, Psb30/Ycf12, at least 3 peripheral proteins of the oxygen-evolving complex and a large number of cofactors. It forms dimeric complexes.</text>
</comment>
<comment type="subcellular location">
    <subcellularLocation>
        <location evidence="1">Plastid</location>
        <location evidence="1">Chloroplast thylakoid membrane</location>
        <topology evidence="1">Single-pass membrane protein</topology>
    </subcellularLocation>
</comment>
<comment type="similarity">
    <text evidence="1">Belongs to the PsbK family.</text>
</comment>
<feature type="propeptide" id="PRO_0000029493" evidence="1">
    <location>
        <begin position="1"/>
        <end position="24"/>
    </location>
</feature>
<feature type="chain" id="PRO_0000029494" description="Photosystem II reaction center protein K" evidence="1">
    <location>
        <begin position="25"/>
        <end position="61"/>
    </location>
</feature>
<feature type="transmembrane region" description="Helical" evidence="1">
    <location>
        <begin position="36"/>
        <end position="56"/>
    </location>
</feature>
<organism>
    <name type="scientific">Nymphaea alba</name>
    <name type="common">White water-lily</name>
    <name type="synonym">Castalia alba</name>
    <dbReference type="NCBI Taxonomy" id="34301"/>
    <lineage>
        <taxon>Eukaryota</taxon>
        <taxon>Viridiplantae</taxon>
        <taxon>Streptophyta</taxon>
        <taxon>Embryophyta</taxon>
        <taxon>Tracheophyta</taxon>
        <taxon>Spermatophyta</taxon>
        <taxon>Magnoliopsida</taxon>
        <taxon>Nymphaeales</taxon>
        <taxon>Nymphaeaceae</taxon>
        <taxon>Nymphaea</taxon>
    </lineage>
</organism>
<proteinExistence type="inferred from homology"/>
<reference key="1">
    <citation type="journal article" date="2004" name="Mol. Biol. Evol.">
        <title>The chloroplast genome of Nymphaea alba: whole-genome analyses and the problem of identifying the most basal angiosperm.</title>
        <authorList>
            <person name="Goremykin V.V."/>
            <person name="Hirsch-Ernst K.I."/>
            <person name="Woelfl S."/>
            <person name="Hellwig F.H."/>
        </authorList>
    </citation>
    <scope>NUCLEOTIDE SEQUENCE [LARGE SCALE GENOMIC DNA]</scope>
</reference>
<gene>
    <name evidence="1" type="primary">psbK</name>
</gene>